<feature type="signal peptide" description="Tat-type signal" evidence="3">
    <location>
        <begin position="1"/>
        <end position="45"/>
    </location>
</feature>
<feature type="chain" id="PRO_0000278553" description="Deferrochelatase">
    <location>
        <begin position="46"/>
        <end position="434"/>
    </location>
</feature>
<feature type="binding site" evidence="2">
    <location>
        <begin position="247"/>
        <end position="249"/>
    </location>
    <ligand>
        <name>heme b</name>
        <dbReference type="ChEBI" id="CHEBI:60344"/>
    </ligand>
</feature>
<feature type="binding site" description="proximal binding residue" evidence="2">
    <location>
        <position position="340"/>
    </location>
    <ligand>
        <name>heme b</name>
        <dbReference type="ChEBI" id="CHEBI:60344"/>
    </ligand>
    <ligandPart>
        <name>Fe</name>
        <dbReference type="ChEBI" id="CHEBI:18248"/>
    </ligandPart>
</feature>
<feature type="binding site" evidence="2">
    <location>
        <begin position="345"/>
        <end position="347"/>
    </location>
    <ligand>
        <name>heme b</name>
        <dbReference type="ChEBI" id="CHEBI:60344"/>
    </ligand>
</feature>
<feature type="binding site" evidence="2">
    <location>
        <position position="358"/>
    </location>
    <ligand>
        <name>heme b</name>
        <dbReference type="ChEBI" id="CHEBI:60344"/>
    </ligand>
</feature>
<name>EFEB_YERPS</name>
<gene>
    <name type="primary">efeB</name>
    <name type="ordered locus">YPTB1727</name>
</gene>
<keyword id="KW-0349">Heme</keyword>
<keyword id="KW-0408">Iron</keyword>
<keyword id="KW-0456">Lyase</keyword>
<keyword id="KW-0479">Metal-binding</keyword>
<keyword id="KW-0560">Oxidoreductase</keyword>
<keyword id="KW-0574">Periplasm</keyword>
<keyword id="KW-0575">Peroxidase</keyword>
<keyword id="KW-0732">Signal</keyword>
<sequence>MRDKTGPKFGPYQPDDEAVSPSRRRLILGMGMVSGALVLGGAKTAQAADCRSPDVAGTQDERWQKQPFYGQHQAGVLTPQQAAMMLVAFDVLATDKTSLIRLFKLLTERLAFLTTGGRAPSVNAKLPPLDSGIMGPEIYPDNLTVTVSVGNALFDERFGLQGQKPLRLQRMTRFPNDSLDAGLCHGDVMLQICANTNETVIHALRDIIKHTPDLLSVRWKREGFISAHAARSKGQETPINLLGFKDGTANPKISNKPLINNVVWVSNNAGEPAWAVGGSYQVVRIIRFKVEFWDRTPLQEQQTIFGRDKNSGAPLGMQHEHDEPNYAKDPEGKVIPMDAHIRLANPRTIETQRNLMLRRGYSYSLGVSNSGQLDMGLLFVCYQSDLAQAFLTVQERLNGEALEEYVKPIGGGYFFTLPGVADANHYLAQSLLEA</sequence>
<proteinExistence type="inferred from homology"/>
<dbReference type="EC" id="4.98.1.1" evidence="2"/>
<dbReference type="EC" id="1.11.1.-" evidence="2"/>
<dbReference type="EMBL" id="BX936398">
    <property type="protein sequence ID" value="CAH20966.1"/>
    <property type="molecule type" value="Genomic_DNA"/>
</dbReference>
<dbReference type="RefSeq" id="WP_011192194.1">
    <property type="nucleotide sequence ID" value="NC_006155.1"/>
</dbReference>
<dbReference type="SMR" id="Q66BP4"/>
<dbReference type="PeroxiBase" id="5877">
    <property type="entry name" value="YpsDyPrx01_IP32953"/>
</dbReference>
<dbReference type="GeneID" id="49786195"/>
<dbReference type="KEGG" id="ypo:BZ17_773"/>
<dbReference type="KEGG" id="yps:YPTB1727"/>
<dbReference type="PATRIC" id="fig|273123.14.peg.818"/>
<dbReference type="Proteomes" id="UP000001011">
    <property type="component" value="Chromosome"/>
</dbReference>
<dbReference type="GO" id="GO:0005829">
    <property type="term" value="C:cytosol"/>
    <property type="evidence" value="ECO:0007669"/>
    <property type="project" value="TreeGrafter"/>
</dbReference>
<dbReference type="GO" id="GO:0042597">
    <property type="term" value="C:periplasmic space"/>
    <property type="evidence" value="ECO:0007669"/>
    <property type="project" value="UniProtKB-SubCell"/>
</dbReference>
<dbReference type="GO" id="GO:0004325">
    <property type="term" value="F:ferrochelatase activity"/>
    <property type="evidence" value="ECO:0007669"/>
    <property type="project" value="RHEA"/>
</dbReference>
<dbReference type="GO" id="GO:0020037">
    <property type="term" value="F:heme binding"/>
    <property type="evidence" value="ECO:0007669"/>
    <property type="project" value="InterPro"/>
</dbReference>
<dbReference type="GO" id="GO:0046872">
    <property type="term" value="F:metal ion binding"/>
    <property type="evidence" value="ECO:0007669"/>
    <property type="project" value="UniProtKB-KW"/>
</dbReference>
<dbReference type="GO" id="GO:0004601">
    <property type="term" value="F:peroxidase activity"/>
    <property type="evidence" value="ECO:0007669"/>
    <property type="project" value="UniProtKB-KW"/>
</dbReference>
<dbReference type="GO" id="GO:0033212">
    <property type="term" value="P:iron import into cell"/>
    <property type="evidence" value="ECO:0007669"/>
    <property type="project" value="InterPro"/>
</dbReference>
<dbReference type="InterPro" id="IPR011008">
    <property type="entry name" value="Dimeric_a/b-barrel"/>
</dbReference>
<dbReference type="InterPro" id="IPR048328">
    <property type="entry name" value="Dyp_perox_C"/>
</dbReference>
<dbReference type="InterPro" id="IPR048327">
    <property type="entry name" value="Dyp_perox_N"/>
</dbReference>
<dbReference type="InterPro" id="IPR006314">
    <property type="entry name" value="Dyp_peroxidase"/>
</dbReference>
<dbReference type="InterPro" id="IPR006313">
    <property type="entry name" value="EfeB/EfeN"/>
</dbReference>
<dbReference type="InterPro" id="IPR006311">
    <property type="entry name" value="TAT_signal"/>
</dbReference>
<dbReference type="NCBIfam" id="TIGR01413">
    <property type="entry name" value="Dyp_perox_fam"/>
    <property type="match status" value="1"/>
</dbReference>
<dbReference type="NCBIfam" id="TIGR01412">
    <property type="entry name" value="tat_substr_1"/>
    <property type="match status" value="1"/>
</dbReference>
<dbReference type="PANTHER" id="PTHR30521:SF4">
    <property type="entry name" value="DEFERROCHELATASE"/>
    <property type="match status" value="1"/>
</dbReference>
<dbReference type="PANTHER" id="PTHR30521">
    <property type="entry name" value="DEFERROCHELATASE/PEROXIDASE"/>
    <property type="match status" value="1"/>
</dbReference>
<dbReference type="Pfam" id="PF20628">
    <property type="entry name" value="Dyp_perox_C"/>
    <property type="match status" value="1"/>
</dbReference>
<dbReference type="Pfam" id="PF04261">
    <property type="entry name" value="Dyp_perox_N"/>
    <property type="match status" value="1"/>
</dbReference>
<dbReference type="SUPFAM" id="SSF54909">
    <property type="entry name" value="Dimeric alpha+beta barrel"/>
    <property type="match status" value="1"/>
</dbReference>
<dbReference type="PROSITE" id="PS51404">
    <property type="entry name" value="DYP_PEROXIDASE"/>
    <property type="match status" value="1"/>
</dbReference>
<dbReference type="PROSITE" id="PS51318">
    <property type="entry name" value="TAT"/>
    <property type="match status" value="1"/>
</dbReference>
<organism>
    <name type="scientific">Yersinia pseudotuberculosis serotype I (strain IP32953)</name>
    <dbReference type="NCBI Taxonomy" id="273123"/>
    <lineage>
        <taxon>Bacteria</taxon>
        <taxon>Pseudomonadati</taxon>
        <taxon>Pseudomonadota</taxon>
        <taxon>Gammaproteobacteria</taxon>
        <taxon>Enterobacterales</taxon>
        <taxon>Yersiniaceae</taxon>
        <taxon>Yersinia</taxon>
    </lineage>
</organism>
<accession>Q66BP4</accession>
<comment type="function">
    <text evidence="2">Involved in the recovery of exogenous heme iron. Extracts iron from heme while preserving the protoporphyrin ring intact.</text>
</comment>
<comment type="catalytic activity">
    <reaction evidence="2">
        <text>heme b + 2 H(+) = protoporphyrin IX + Fe(2+)</text>
        <dbReference type="Rhea" id="RHEA:22584"/>
        <dbReference type="ChEBI" id="CHEBI:15378"/>
        <dbReference type="ChEBI" id="CHEBI:29033"/>
        <dbReference type="ChEBI" id="CHEBI:57306"/>
        <dbReference type="ChEBI" id="CHEBI:60344"/>
        <dbReference type="EC" id="4.98.1.1"/>
    </reaction>
    <physiologicalReaction direction="left-to-right" evidence="2">
        <dbReference type="Rhea" id="RHEA:22585"/>
    </physiologicalReaction>
</comment>
<comment type="cofactor">
    <cofactor evidence="1">
        <name>heme b</name>
        <dbReference type="ChEBI" id="CHEBI:60344"/>
    </cofactor>
    <text evidence="1">Binds 1 heme b (iron(II)-protoporphyrin IX) group non-covalently per subunit.</text>
</comment>
<comment type="subunit">
    <text evidence="1">Homodimer. Part of a ferrous iron transporter composed of EfeU, EfeO and EfeB (By similarity).</text>
</comment>
<comment type="subcellular location">
    <subcellularLocation>
        <location evidence="1">Periplasm</location>
    </subcellularLocation>
</comment>
<comment type="PTM">
    <text>Predicted to be exported by the Tat system. The position of the signal peptide cleavage has not been experimentally proven.</text>
</comment>
<comment type="similarity">
    <text evidence="4">Belongs to the DyP-type peroxidase family. EfeB subfamily.</text>
</comment>
<evidence type="ECO:0000250" key="1"/>
<evidence type="ECO:0000250" key="2">
    <source>
        <dbReference type="UniProtKB" id="P31545"/>
    </source>
</evidence>
<evidence type="ECO:0000255" key="3">
    <source>
        <dbReference type="PROSITE-ProRule" id="PRU00648"/>
    </source>
</evidence>
<evidence type="ECO:0000305" key="4"/>
<protein>
    <recommendedName>
        <fullName>Deferrochelatase</fullName>
        <ecNumber evidence="2">4.98.1.1</ecNumber>
    </recommendedName>
    <alternativeName>
        <fullName>Peroxidase EfeB</fullName>
        <ecNumber evidence="2">1.11.1.-</ecNumber>
    </alternativeName>
</protein>
<reference key="1">
    <citation type="journal article" date="2004" name="Proc. Natl. Acad. Sci. U.S.A.">
        <title>Insights into the evolution of Yersinia pestis through whole-genome comparison with Yersinia pseudotuberculosis.</title>
        <authorList>
            <person name="Chain P.S.G."/>
            <person name="Carniel E."/>
            <person name="Larimer F.W."/>
            <person name="Lamerdin J."/>
            <person name="Stoutland P.O."/>
            <person name="Regala W.M."/>
            <person name="Georgescu A.M."/>
            <person name="Vergez L.M."/>
            <person name="Land M.L."/>
            <person name="Motin V.L."/>
            <person name="Brubaker R.R."/>
            <person name="Fowler J."/>
            <person name="Hinnebusch J."/>
            <person name="Marceau M."/>
            <person name="Medigue C."/>
            <person name="Simonet M."/>
            <person name="Chenal-Francisque V."/>
            <person name="Souza B."/>
            <person name="Dacheux D."/>
            <person name="Elliott J.M."/>
            <person name="Derbise A."/>
            <person name="Hauser L.J."/>
            <person name="Garcia E."/>
        </authorList>
    </citation>
    <scope>NUCLEOTIDE SEQUENCE [LARGE SCALE GENOMIC DNA]</scope>
    <source>
        <strain>IP32953</strain>
    </source>
</reference>